<dbReference type="EC" id="5.2.1.8" evidence="1"/>
<dbReference type="EMBL" id="AE007869">
    <property type="protein sequence ID" value="AAK87437.2"/>
    <property type="molecule type" value="Genomic_DNA"/>
</dbReference>
<dbReference type="PIR" id="AC2781">
    <property type="entry name" value="AC2781"/>
</dbReference>
<dbReference type="PIR" id="D97560">
    <property type="entry name" value="D97560"/>
</dbReference>
<dbReference type="RefSeq" id="NP_354652.2">
    <property type="nucleotide sequence ID" value="NC_003062.2"/>
</dbReference>
<dbReference type="RefSeq" id="WP_010971784.1">
    <property type="nucleotide sequence ID" value="NC_003062.2"/>
</dbReference>
<dbReference type="SMR" id="Q8UEU0"/>
<dbReference type="STRING" id="176299.Atu1664"/>
<dbReference type="EnsemblBacteria" id="AAK87437">
    <property type="protein sequence ID" value="AAK87437"/>
    <property type="gene ID" value="Atu1664"/>
</dbReference>
<dbReference type="GeneID" id="1133702"/>
<dbReference type="KEGG" id="atu:Atu1664"/>
<dbReference type="PATRIC" id="fig|176299.10.peg.1682"/>
<dbReference type="eggNOG" id="COG0544">
    <property type="taxonomic scope" value="Bacteria"/>
</dbReference>
<dbReference type="HOGENOM" id="CLU_033058_2_2_5"/>
<dbReference type="OrthoDB" id="9767721at2"/>
<dbReference type="PhylomeDB" id="Q8UEU0"/>
<dbReference type="BioCyc" id="AGRO:ATU1664-MONOMER"/>
<dbReference type="Proteomes" id="UP000000813">
    <property type="component" value="Chromosome circular"/>
</dbReference>
<dbReference type="GO" id="GO:0005737">
    <property type="term" value="C:cytoplasm"/>
    <property type="evidence" value="ECO:0007669"/>
    <property type="project" value="UniProtKB-SubCell"/>
</dbReference>
<dbReference type="GO" id="GO:0003755">
    <property type="term" value="F:peptidyl-prolyl cis-trans isomerase activity"/>
    <property type="evidence" value="ECO:0007669"/>
    <property type="project" value="UniProtKB-UniRule"/>
</dbReference>
<dbReference type="GO" id="GO:0044183">
    <property type="term" value="F:protein folding chaperone"/>
    <property type="evidence" value="ECO:0007669"/>
    <property type="project" value="TreeGrafter"/>
</dbReference>
<dbReference type="GO" id="GO:0043022">
    <property type="term" value="F:ribosome binding"/>
    <property type="evidence" value="ECO:0007669"/>
    <property type="project" value="TreeGrafter"/>
</dbReference>
<dbReference type="GO" id="GO:0051083">
    <property type="term" value="P:'de novo' cotranslational protein folding"/>
    <property type="evidence" value="ECO:0007669"/>
    <property type="project" value="TreeGrafter"/>
</dbReference>
<dbReference type="GO" id="GO:0051301">
    <property type="term" value="P:cell division"/>
    <property type="evidence" value="ECO:0007669"/>
    <property type="project" value="UniProtKB-KW"/>
</dbReference>
<dbReference type="GO" id="GO:0061077">
    <property type="term" value="P:chaperone-mediated protein folding"/>
    <property type="evidence" value="ECO:0007669"/>
    <property type="project" value="TreeGrafter"/>
</dbReference>
<dbReference type="GO" id="GO:0015031">
    <property type="term" value="P:protein transport"/>
    <property type="evidence" value="ECO:0007669"/>
    <property type="project" value="UniProtKB-UniRule"/>
</dbReference>
<dbReference type="GO" id="GO:0043335">
    <property type="term" value="P:protein unfolding"/>
    <property type="evidence" value="ECO:0007669"/>
    <property type="project" value="TreeGrafter"/>
</dbReference>
<dbReference type="FunFam" id="3.10.50.40:FF:000001">
    <property type="entry name" value="Trigger factor"/>
    <property type="match status" value="1"/>
</dbReference>
<dbReference type="Gene3D" id="3.10.50.40">
    <property type="match status" value="1"/>
</dbReference>
<dbReference type="Gene3D" id="3.30.70.1050">
    <property type="entry name" value="Trigger factor ribosome-binding domain"/>
    <property type="match status" value="1"/>
</dbReference>
<dbReference type="Gene3D" id="1.10.3120.10">
    <property type="entry name" value="Trigger factor, C-terminal domain"/>
    <property type="match status" value="1"/>
</dbReference>
<dbReference type="HAMAP" id="MF_00303">
    <property type="entry name" value="Trigger_factor_Tig"/>
    <property type="match status" value="1"/>
</dbReference>
<dbReference type="InterPro" id="IPR046357">
    <property type="entry name" value="PPIase_dom_sf"/>
</dbReference>
<dbReference type="InterPro" id="IPR001179">
    <property type="entry name" value="PPIase_FKBP_dom"/>
</dbReference>
<dbReference type="InterPro" id="IPR005215">
    <property type="entry name" value="Trig_fac"/>
</dbReference>
<dbReference type="InterPro" id="IPR008880">
    <property type="entry name" value="Trigger_fac_C"/>
</dbReference>
<dbReference type="InterPro" id="IPR037041">
    <property type="entry name" value="Trigger_fac_C_sf"/>
</dbReference>
<dbReference type="InterPro" id="IPR008881">
    <property type="entry name" value="Trigger_fac_ribosome-bd_bac"/>
</dbReference>
<dbReference type="InterPro" id="IPR036611">
    <property type="entry name" value="Trigger_fac_ribosome-bd_sf"/>
</dbReference>
<dbReference type="InterPro" id="IPR027304">
    <property type="entry name" value="Trigger_fact/SurA_dom_sf"/>
</dbReference>
<dbReference type="NCBIfam" id="TIGR00115">
    <property type="entry name" value="tig"/>
    <property type="match status" value="1"/>
</dbReference>
<dbReference type="PANTHER" id="PTHR30560">
    <property type="entry name" value="TRIGGER FACTOR CHAPERONE AND PEPTIDYL-PROLYL CIS/TRANS ISOMERASE"/>
    <property type="match status" value="1"/>
</dbReference>
<dbReference type="PANTHER" id="PTHR30560:SF3">
    <property type="entry name" value="TRIGGER FACTOR-LIKE PROTEIN TIG, CHLOROPLASTIC"/>
    <property type="match status" value="1"/>
</dbReference>
<dbReference type="Pfam" id="PF00254">
    <property type="entry name" value="FKBP_C"/>
    <property type="match status" value="1"/>
</dbReference>
<dbReference type="Pfam" id="PF05698">
    <property type="entry name" value="Trigger_C"/>
    <property type="match status" value="1"/>
</dbReference>
<dbReference type="Pfam" id="PF05697">
    <property type="entry name" value="Trigger_N"/>
    <property type="match status" value="1"/>
</dbReference>
<dbReference type="PIRSF" id="PIRSF003095">
    <property type="entry name" value="Trigger_factor"/>
    <property type="match status" value="1"/>
</dbReference>
<dbReference type="SUPFAM" id="SSF54534">
    <property type="entry name" value="FKBP-like"/>
    <property type="match status" value="1"/>
</dbReference>
<dbReference type="SUPFAM" id="SSF109998">
    <property type="entry name" value="Triger factor/SurA peptide-binding domain-like"/>
    <property type="match status" value="1"/>
</dbReference>
<dbReference type="SUPFAM" id="SSF102735">
    <property type="entry name" value="Trigger factor ribosome-binding domain"/>
    <property type="match status" value="1"/>
</dbReference>
<dbReference type="PROSITE" id="PS50059">
    <property type="entry name" value="FKBP_PPIASE"/>
    <property type="match status" value="1"/>
</dbReference>
<comment type="function">
    <text evidence="1">Involved in protein export. Acts as a chaperone by maintaining the newly synthesized protein in an open conformation. Functions as a peptidyl-prolyl cis-trans isomerase.</text>
</comment>
<comment type="catalytic activity">
    <reaction evidence="1">
        <text>[protein]-peptidylproline (omega=180) = [protein]-peptidylproline (omega=0)</text>
        <dbReference type="Rhea" id="RHEA:16237"/>
        <dbReference type="Rhea" id="RHEA-COMP:10747"/>
        <dbReference type="Rhea" id="RHEA-COMP:10748"/>
        <dbReference type="ChEBI" id="CHEBI:83833"/>
        <dbReference type="ChEBI" id="CHEBI:83834"/>
        <dbReference type="EC" id="5.2.1.8"/>
    </reaction>
</comment>
<comment type="subcellular location">
    <subcellularLocation>
        <location>Cytoplasm</location>
    </subcellularLocation>
    <text evidence="1">About half TF is bound to the ribosome near the polypeptide exit tunnel while the other half is free in the cytoplasm.</text>
</comment>
<comment type="domain">
    <text evidence="1">Consists of 3 domains; the N-terminus binds the ribosome, the middle domain has PPIase activity, while the C-terminus has intrinsic chaperone activity on its own.</text>
</comment>
<comment type="similarity">
    <text evidence="1">Belongs to the FKBP-type PPIase family. Tig subfamily.</text>
</comment>
<sequence>MQVIETLADGLKRELKIVIPAADMKARLDERLVDAKDKVRINGFRPGKVPMGHLKKMYGKSIMADLVNELVREKPSEILSSRGEKSATQPAISMTEDEQEAEKILSAESDFEFTVAYEIIPAIELKANDGIKVTREVVEVSEDEINEQILKIAESARTYETKKGKAADGDRVTMNYLGKVDGVAFDGGTAEDAELVLGSGRFIPGFEDQLVGVKAGDEKTITVTFPADYPAANLAGKDATFDVTVKEVAAAAAVEINDELAEKLGLESAEKLKEIVKGQIESQFGNVTRQKVKRQILDQLDEMYKFDTPAGLVDAEFDNIWRQINTDLAQSGKTFADEDTTEEEAREEYRKLAERRVRLGLVLSEIGEKAGVEVTEEEMQRALFQQLQQFPGQQKEILDFFRNTPGASASLRAPIFEEKVIDKLLTEISVTDKTVSKEELLADDGEEETETKKKAPAKKKAAAKADDAAEGEEAAPKKKAPAKKKATEADAE</sequence>
<evidence type="ECO:0000255" key="1">
    <source>
        <dbReference type="HAMAP-Rule" id="MF_00303"/>
    </source>
</evidence>
<evidence type="ECO:0000256" key="2">
    <source>
        <dbReference type="SAM" id="MobiDB-lite"/>
    </source>
</evidence>
<feature type="chain" id="PRO_0000179299" description="Trigger factor">
    <location>
        <begin position="1"/>
        <end position="492"/>
    </location>
</feature>
<feature type="domain" description="PPIase FKBP-type" evidence="1">
    <location>
        <begin position="169"/>
        <end position="254"/>
    </location>
</feature>
<feature type="region of interest" description="Disordered" evidence="2">
    <location>
        <begin position="77"/>
        <end position="96"/>
    </location>
</feature>
<feature type="region of interest" description="Disordered" evidence="2">
    <location>
        <begin position="439"/>
        <end position="492"/>
    </location>
</feature>
<name>TIG_AGRFC</name>
<organism>
    <name type="scientific">Agrobacterium fabrum (strain C58 / ATCC 33970)</name>
    <name type="common">Agrobacterium tumefaciens (strain C58)</name>
    <dbReference type="NCBI Taxonomy" id="176299"/>
    <lineage>
        <taxon>Bacteria</taxon>
        <taxon>Pseudomonadati</taxon>
        <taxon>Pseudomonadota</taxon>
        <taxon>Alphaproteobacteria</taxon>
        <taxon>Hyphomicrobiales</taxon>
        <taxon>Rhizobiaceae</taxon>
        <taxon>Rhizobium/Agrobacterium group</taxon>
        <taxon>Agrobacterium</taxon>
        <taxon>Agrobacterium tumefaciens complex</taxon>
    </lineage>
</organism>
<gene>
    <name evidence="1" type="primary">tig</name>
    <name type="ordered locus">Atu1664</name>
    <name type="ORF">AGR_C_3060</name>
</gene>
<keyword id="KW-0131">Cell cycle</keyword>
<keyword id="KW-0132">Cell division</keyword>
<keyword id="KW-0143">Chaperone</keyword>
<keyword id="KW-0963">Cytoplasm</keyword>
<keyword id="KW-0413">Isomerase</keyword>
<keyword id="KW-1185">Reference proteome</keyword>
<keyword id="KW-0697">Rotamase</keyword>
<accession>Q8UEU0</accession>
<proteinExistence type="inferred from homology"/>
<protein>
    <recommendedName>
        <fullName evidence="1">Trigger factor</fullName>
        <shortName evidence="1">TF</shortName>
        <ecNumber evidence="1">5.2.1.8</ecNumber>
    </recommendedName>
    <alternativeName>
        <fullName evidence="1">PPIase</fullName>
    </alternativeName>
</protein>
<reference key="1">
    <citation type="journal article" date="2001" name="Science">
        <title>The genome of the natural genetic engineer Agrobacterium tumefaciens C58.</title>
        <authorList>
            <person name="Wood D.W."/>
            <person name="Setubal J.C."/>
            <person name="Kaul R."/>
            <person name="Monks D.E."/>
            <person name="Kitajima J.P."/>
            <person name="Okura V.K."/>
            <person name="Zhou Y."/>
            <person name="Chen L."/>
            <person name="Wood G.E."/>
            <person name="Almeida N.F. Jr."/>
            <person name="Woo L."/>
            <person name="Chen Y."/>
            <person name="Paulsen I.T."/>
            <person name="Eisen J.A."/>
            <person name="Karp P.D."/>
            <person name="Bovee D. Sr."/>
            <person name="Chapman P."/>
            <person name="Clendenning J."/>
            <person name="Deatherage G."/>
            <person name="Gillet W."/>
            <person name="Grant C."/>
            <person name="Kutyavin T."/>
            <person name="Levy R."/>
            <person name="Li M.-J."/>
            <person name="McClelland E."/>
            <person name="Palmieri A."/>
            <person name="Raymond C."/>
            <person name="Rouse G."/>
            <person name="Saenphimmachak C."/>
            <person name="Wu Z."/>
            <person name="Romero P."/>
            <person name="Gordon D."/>
            <person name="Zhang S."/>
            <person name="Yoo H."/>
            <person name="Tao Y."/>
            <person name="Biddle P."/>
            <person name="Jung M."/>
            <person name="Krespan W."/>
            <person name="Perry M."/>
            <person name="Gordon-Kamm B."/>
            <person name="Liao L."/>
            <person name="Kim S."/>
            <person name="Hendrick C."/>
            <person name="Zhao Z.-Y."/>
            <person name="Dolan M."/>
            <person name="Chumley F."/>
            <person name="Tingey S.V."/>
            <person name="Tomb J.-F."/>
            <person name="Gordon M.P."/>
            <person name="Olson M.V."/>
            <person name="Nester E.W."/>
        </authorList>
    </citation>
    <scope>NUCLEOTIDE SEQUENCE [LARGE SCALE GENOMIC DNA]</scope>
    <source>
        <strain>C58 / ATCC 33970</strain>
    </source>
</reference>
<reference key="2">
    <citation type="journal article" date="2001" name="Science">
        <title>Genome sequence of the plant pathogen and biotechnology agent Agrobacterium tumefaciens C58.</title>
        <authorList>
            <person name="Goodner B."/>
            <person name="Hinkle G."/>
            <person name="Gattung S."/>
            <person name="Miller N."/>
            <person name="Blanchard M."/>
            <person name="Qurollo B."/>
            <person name="Goldman B.S."/>
            <person name="Cao Y."/>
            <person name="Askenazi M."/>
            <person name="Halling C."/>
            <person name="Mullin L."/>
            <person name="Houmiel K."/>
            <person name="Gordon J."/>
            <person name="Vaudin M."/>
            <person name="Iartchouk O."/>
            <person name="Epp A."/>
            <person name="Liu F."/>
            <person name="Wollam C."/>
            <person name="Allinger M."/>
            <person name="Doughty D."/>
            <person name="Scott C."/>
            <person name="Lappas C."/>
            <person name="Markelz B."/>
            <person name="Flanagan C."/>
            <person name="Crowell C."/>
            <person name="Gurson J."/>
            <person name="Lomo C."/>
            <person name="Sear C."/>
            <person name="Strub G."/>
            <person name="Cielo C."/>
            <person name="Slater S."/>
        </authorList>
    </citation>
    <scope>NUCLEOTIDE SEQUENCE [LARGE SCALE GENOMIC DNA]</scope>
    <source>
        <strain>C58 / ATCC 33970</strain>
    </source>
</reference>